<reference key="1">
    <citation type="journal article" date="2005" name="Nature">
        <title>The genome of the social amoeba Dictyostelium discoideum.</title>
        <authorList>
            <person name="Eichinger L."/>
            <person name="Pachebat J.A."/>
            <person name="Gloeckner G."/>
            <person name="Rajandream M.A."/>
            <person name="Sucgang R."/>
            <person name="Berriman M."/>
            <person name="Song J."/>
            <person name="Olsen R."/>
            <person name="Szafranski K."/>
            <person name="Xu Q."/>
            <person name="Tunggal B."/>
            <person name="Kummerfeld S."/>
            <person name="Madera M."/>
            <person name="Konfortov B.A."/>
            <person name="Rivero F."/>
            <person name="Bankier A.T."/>
            <person name="Lehmann R."/>
            <person name="Hamlin N."/>
            <person name="Davies R."/>
            <person name="Gaudet P."/>
            <person name="Fey P."/>
            <person name="Pilcher K."/>
            <person name="Chen G."/>
            <person name="Saunders D."/>
            <person name="Sodergren E.J."/>
            <person name="Davis P."/>
            <person name="Kerhornou A."/>
            <person name="Nie X."/>
            <person name="Hall N."/>
            <person name="Anjard C."/>
            <person name="Hemphill L."/>
            <person name="Bason N."/>
            <person name="Farbrother P."/>
            <person name="Desany B."/>
            <person name="Just E."/>
            <person name="Morio T."/>
            <person name="Rost R."/>
            <person name="Churcher C.M."/>
            <person name="Cooper J."/>
            <person name="Haydock S."/>
            <person name="van Driessche N."/>
            <person name="Cronin A."/>
            <person name="Goodhead I."/>
            <person name="Muzny D.M."/>
            <person name="Mourier T."/>
            <person name="Pain A."/>
            <person name="Lu M."/>
            <person name="Harper D."/>
            <person name="Lindsay R."/>
            <person name="Hauser H."/>
            <person name="James K.D."/>
            <person name="Quiles M."/>
            <person name="Madan Babu M."/>
            <person name="Saito T."/>
            <person name="Buchrieser C."/>
            <person name="Wardroper A."/>
            <person name="Felder M."/>
            <person name="Thangavelu M."/>
            <person name="Johnson D."/>
            <person name="Knights A."/>
            <person name="Loulseged H."/>
            <person name="Mungall K.L."/>
            <person name="Oliver K."/>
            <person name="Price C."/>
            <person name="Quail M.A."/>
            <person name="Urushihara H."/>
            <person name="Hernandez J."/>
            <person name="Rabbinowitsch E."/>
            <person name="Steffen D."/>
            <person name="Sanders M."/>
            <person name="Ma J."/>
            <person name="Kohara Y."/>
            <person name="Sharp S."/>
            <person name="Simmonds M.N."/>
            <person name="Spiegler S."/>
            <person name="Tivey A."/>
            <person name="Sugano S."/>
            <person name="White B."/>
            <person name="Walker D."/>
            <person name="Woodward J.R."/>
            <person name="Winckler T."/>
            <person name="Tanaka Y."/>
            <person name="Shaulsky G."/>
            <person name="Schleicher M."/>
            <person name="Weinstock G.M."/>
            <person name="Rosenthal A."/>
            <person name="Cox E.C."/>
            <person name="Chisholm R.L."/>
            <person name="Gibbs R.A."/>
            <person name="Loomis W.F."/>
            <person name="Platzer M."/>
            <person name="Kay R.R."/>
            <person name="Williams J.G."/>
            <person name="Dear P.H."/>
            <person name="Noegel A.A."/>
            <person name="Barrell B.G."/>
            <person name="Kuspa A."/>
        </authorList>
    </citation>
    <scope>NUCLEOTIDE SEQUENCE [LARGE SCALE GENOMIC DNA]</scope>
    <source>
        <strain>AX4</strain>
    </source>
</reference>
<accession>Q54X97</accession>
<name>EIF3C_DICDI</name>
<comment type="function">
    <text evidence="1">Component of the eukaryotic translation initiation factor 3 (eIF-3) complex, which is involved in protein synthesis of a specialized repertoire of mRNAs and, together with other initiation factors, stimulates binding of mRNA and methionyl-tRNAi to the 40S ribosome. The eIF-3 complex specifically targets and initiates translation of a subset of mRNAs involved in cell proliferation.</text>
</comment>
<comment type="subunit">
    <text evidence="1">Component of the eukaryotic translation initiation factor 3 (eIF-3) complex.</text>
</comment>
<comment type="subcellular location">
    <subcellularLocation>
        <location evidence="1">Cytoplasm</location>
    </subcellularLocation>
</comment>
<comment type="similarity">
    <text evidence="1">Belongs to the eIF-3 subunit C family.</text>
</comment>
<dbReference type="EMBL" id="AAFI02000027">
    <property type="protein sequence ID" value="EAL67893.1"/>
    <property type="molecule type" value="Genomic_DNA"/>
</dbReference>
<dbReference type="RefSeq" id="XP_641870.1">
    <property type="nucleotide sequence ID" value="XM_636778.1"/>
</dbReference>
<dbReference type="SMR" id="Q54X97"/>
<dbReference type="FunCoup" id="Q54X97">
    <property type="interactions" value="975"/>
</dbReference>
<dbReference type="STRING" id="44689.Q54X97"/>
<dbReference type="PaxDb" id="44689-DDB0233926"/>
<dbReference type="EnsemblProtists" id="EAL67893">
    <property type="protein sequence ID" value="EAL67893"/>
    <property type="gene ID" value="DDB_G0279109"/>
</dbReference>
<dbReference type="GeneID" id="8621876"/>
<dbReference type="KEGG" id="ddi:DDB_G0279109"/>
<dbReference type="dictyBase" id="DDB_G0279109">
    <property type="gene designation" value="eif3C"/>
</dbReference>
<dbReference type="VEuPathDB" id="AmoebaDB:DDB_G0279109"/>
<dbReference type="eggNOG" id="KOG1076">
    <property type="taxonomic scope" value="Eukaryota"/>
</dbReference>
<dbReference type="HOGENOM" id="CLU_004304_0_2_1"/>
<dbReference type="InParanoid" id="Q54X97"/>
<dbReference type="OMA" id="FRCGLIK"/>
<dbReference type="PhylomeDB" id="Q54X97"/>
<dbReference type="Reactome" id="R-DDI-156827">
    <property type="pathway name" value="L13a-mediated translational silencing of Ceruloplasmin expression"/>
</dbReference>
<dbReference type="Reactome" id="R-DDI-72689">
    <property type="pathway name" value="Formation of a pool of free 40S subunits"/>
</dbReference>
<dbReference type="Reactome" id="R-DDI-72695">
    <property type="pathway name" value="Formation of the ternary complex, and subsequently, the 43S complex"/>
</dbReference>
<dbReference type="Reactome" id="R-DDI-72702">
    <property type="pathway name" value="Ribosomal scanning and start codon recognition"/>
</dbReference>
<dbReference type="PRO" id="PR:Q54X97"/>
<dbReference type="Proteomes" id="UP000002195">
    <property type="component" value="Chromosome 3"/>
</dbReference>
<dbReference type="GO" id="GO:0016282">
    <property type="term" value="C:eukaryotic 43S preinitiation complex"/>
    <property type="evidence" value="ECO:0007669"/>
    <property type="project" value="UniProtKB-UniRule"/>
</dbReference>
<dbReference type="GO" id="GO:0033290">
    <property type="term" value="C:eukaryotic 48S preinitiation complex"/>
    <property type="evidence" value="ECO:0007669"/>
    <property type="project" value="UniProtKB-UniRule"/>
</dbReference>
<dbReference type="GO" id="GO:0005852">
    <property type="term" value="C:eukaryotic translation initiation factor 3 complex"/>
    <property type="evidence" value="ECO:0000250"/>
    <property type="project" value="dictyBase"/>
</dbReference>
<dbReference type="GO" id="GO:0003723">
    <property type="term" value="F:RNA binding"/>
    <property type="evidence" value="ECO:0007669"/>
    <property type="project" value="InterPro"/>
</dbReference>
<dbReference type="GO" id="GO:0003743">
    <property type="term" value="F:translation initiation factor activity"/>
    <property type="evidence" value="ECO:0000250"/>
    <property type="project" value="dictyBase"/>
</dbReference>
<dbReference type="GO" id="GO:0031369">
    <property type="term" value="F:translation initiation factor binding"/>
    <property type="evidence" value="ECO:0000318"/>
    <property type="project" value="GO_Central"/>
</dbReference>
<dbReference type="GO" id="GO:0001732">
    <property type="term" value="P:formation of cytoplasmic translation initiation complex"/>
    <property type="evidence" value="ECO:0007669"/>
    <property type="project" value="UniProtKB-UniRule"/>
</dbReference>
<dbReference type="GO" id="GO:0006413">
    <property type="term" value="P:translational initiation"/>
    <property type="evidence" value="ECO:0000318"/>
    <property type="project" value="GO_Central"/>
</dbReference>
<dbReference type="HAMAP" id="MF_03002">
    <property type="entry name" value="eIF3c"/>
    <property type="match status" value="1"/>
</dbReference>
<dbReference type="InterPro" id="IPR027516">
    <property type="entry name" value="EIF3C"/>
</dbReference>
<dbReference type="InterPro" id="IPR008905">
    <property type="entry name" value="EIF3C_N_dom"/>
</dbReference>
<dbReference type="InterPro" id="IPR000717">
    <property type="entry name" value="PCI_dom"/>
</dbReference>
<dbReference type="InterPro" id="IPR036390">
    <property type="entry name" value="WH_DNA-bd_sf"/>
</dbReference>
<dbReference type="PANTHER" id="PTHR13937">
    <property type="entry name" value="EUKARYOTIC TRANSLATION INITATION FACTOR 3, SUBUNIT 8 EIF3S8 -RELATED"/>
    <property type="match status" value="1"/>
</dbReference>
<dbReference type="PANTHER" id="PTHR13937:SF0">
    <property type="entry name" value="EUKARYOTIC TRANSLATION INITIATION FACTOR 3 SUBUNIT C-RELATED"/>
    <property type="match status" value="1"/>
</dbReference>
<dbReference type="Pfam" id="PF05470">
    <property type="entry name" value="eIF-3c_N"/>
    <property type="match status" value="1"/>
</dbReference>
<dbReference type="Pfam" id="PF01399">
    <property type="entry name" value="PCI"/>
    <property type="match status" value="1"/>
</dbReference>
<dbReference type="SMART" id="SM00088">
    <property type="entry name" value="PINT"/>
    <property type="match status" value="1"/>
</dbReference>
<dbReference type="SUPFAM" id="SSF46785">
    <property type="entry name" value="Winged helix' DNA-binding domain"/>
    <property type="match status" value="1"/>
</dbReference>
<dbReference type="PROSITE" id="PS50250">
    <property type="entry name" value="PCI"/>
    <property type="match status" value="1"/>
</dbReference>
<protein>
    <recommendedName>
        <fullName evidence="1">Eukaryotic translation initiation factor 3 subunit C</fullName>
        <shortName evidence="1">eIF3c</shortName>
    </recommendedName>
    <alternativeName>
        <fullName evidence="1">Eukaryotic translation initiation factor 3 subunit 8</fullName>
    </alternativeName>
</protein>
<evidence type="ECO:0000255" key="1">
    <source>
        <dbReference type="HAMAP-Rule" id="MF_03002"/>
    </source>
</evidence>
<evidence type="ECO:0000255" key="2">
    <source>
        <dbReference type="PROSITE-ProRule" id="PRU01185"/>
    </source>
</evidence>
<evidence type="ECO:0000256" key="3">
    <source>
        <dbReference type="SAM" id="MobiDB-lite"/>
    </source>
</evidence>
<sequence length="936" mass="106690">MSRFYRQGSSSESSSESSSDSDVQVKKPTRYVSSSEDEIEEKRIVLSAKDKIWQQFDESLKKVRNALKTNDWVSTTSEFDNMTKLITNGKTTRIIEKEGFPPSFIKALFIIQTSHRDLTTEQKKKLHANNNKSYNSIKQKLKKTCDLYAKELKPYHDNPALVNEQENKANSDDDDDDLSESESEESESSDDDKGKGKGKAAFGKKPATKAVVAKKPLTKKGDDDSESESEESESESEELISESWSSDSDDDSDSDSDDDSGDNKWMIKDDKKVVAKASVTTVRKTDKDKLDRRNAVVSPLSGSGSAVPTAGEGEGEKLTQDQIMKKVKEVISNRGKLKTDPMKQIQQLEYFYSLIQGDKETFIVLYELIAAQFDTASVKVALSIPVWQKVADGIKKLLEILETNTNFVLVLEHQEPTISKGQVAVTGNLLALFEMLDDEFSKSLQSINYPTKEYLDRLQDEQIILDLGESLQKYYESAGNNGAAAKIAIRRIEHIYYKSSNLKNNIIPSTMPLSEQITLMSKLSSFVYKFGDERLNARTILCNIYFNAINNKFHEARDMMLMSHLQDNPTLMDVSTQILFNRAMVQLGLCAFRCGYIQEAQNCVVEFSGLRKDLLAQGLSVQSKTAEKDTVREVEETTRILPAHMWIPIDLIETVNLISGMLIAVPQNAYRPFDNKFKTCKFYQRHMDSVDRQIFIAPSETSKDIIYQASKALSAGDWQQCLEHVNTLRFWSLIPDIDSVREKLTRIVQEVSLKTFLFTYSTSYDSILLSELADRFHLPKSQVHSIVAKMMNNHEISASMEHSTESITFRAEQTKLQYLALHYSESLVDFVEQNERIYDVKFGTSYRKKGDNDHLPIAGGQHHGHQHHGHQHHGHHHHNQQQQQHHQQQQQTTQHHHHHHQNQNQGNQQYQNKKHHNSNQQKSHKKRQNNSLVVNN</sequence>
<gene>
    <name type="primary">eif3C</name>
    <name type="synonym">eif3s8</name>
    <name type="ORF">DDB_G0279109</name>
</gene>
<keyword id="KW-0963">Cytoplasm</keyword>
<keyword id="KW-0396">Initiation factor</keyword>
<keyword id="KW-0648">Protein biosynthesis</keyword>
<keyword id="KW-1185">Reference proteome</keyword>
<proteinExistence type="inferred from homology"/>
<organism>
    <name type="scientific">Dictyostelium discoideum</name>
    <name type="common">Social amoeba</name>
    <dbReference type="NCBI Taxonomy" id="44689"/>
    <lineage>
        <taxon>Eukaryota</taxon>
        <taxon>Amoebozoa</taxon>
        <taxon>Evosea</taxon>
        <taxon>Eumycetozoa</taxon>
        <taxon>Dictyostelia</taxon>
        <taxon>Dictyosteliales</taxon>
        <taxon>Dictyosteliaceae</taxon>
        <taxon>Dictyostelium</taxon>
    </lineage>
</organism>
<feature type="chain" id="PRO_0000330330" description="Eukaryotic translation initiation factor 3 subunit C">
    <location>
        <begin position="1"/>
        <end position="936"/>
    </location>
</feature>
<feature type="domain" description="PCI" evidence="2">
    <location>
        <begin position="643"/>
        <end position="814"/>
    </location>
</feature>
<feature type="region of interest" description="Disordered" evidence="3">
    <location>
        <begin position="1"/>
        <end position="38"/>
    </location>
</feature>
<feature type="region of interest" description="Disordered" evidence="3">
    <location>
        <begin position="156"/>
        <end position="265"/>
    </location>
</feature>
<feature type="region of interest" description="Disordered" evidence="3">
    <location>
        <begin position="283"/>
        <end position="317"/>
    </location>
</feature>
<feature type="region of interest" description="Disordered" evidence="3">
    <location>
        <begin position="845"/>
        <end position="936"/>
    </location>
</feature>
<feature type="compositionally biased region" description="Low complexity" evidence="3">
    <location>
        <begin position="9"/>
        <end position="22"/>
    </location>
</feature>
<feature type="compositionally biased region" description="Acidic residues" evidence="3">
    <location>
        <begin position="172"/>
        <end position="190"/>
    </location>
</feature>
<feature type="compositionally biased region" description="Low complexity" evidence="3">
    <location>
        <begin position="199"/>
        <end position="215"/>
    </location>
</feature>
<feature type="compositionally biased region" description="Acidic residues" evidence="3">
    <location>
        <begin position="223"/>
        <end position="240"/>
    </location>
</feature>
<feature type="compositionally biased region" description="Acidic residues" evidence="3">
    <location>
        <begin position="247"/>
        <end position="260"/>
    </location>
</feature>
<feature type="compositionally biased region" description="Basic and acidic residues" evidence="3">
    <location>
        <begin position="283"/>
        <end position="294"/>
    </location>
</feature>
<feature type="compositionally biased region" description="Basic residues" evidence="3">
    <location>
        <begin position="862"/>
        <end position="879"/>
    </location>
</feature>
<feature type="compositionally biased region" description="Low complexity" evidence="3">
    <location>
        <begin position="880"/>
        <end position="893"/>
    </location>
</feature>
<feature type="compositionally biased region" description="Low complexity" evidence="3">
    <location>
        <begin position="902"/>
        <end position="911"/>
    </location>
</feature>
<feature type="compositionally biased region" description="Basic residues" evidence="3">
    <location>
        <begin position="912"/>
        <end position="928"/>
    </location>
</feature>